<accession>B0YBR5</accession>
<feature type="chain" id="PRO_0000393861" description="Protein alcS">
    <location>
        <begin position="1"/>
        <end position="272"/>
    </location>
</feature>
<feature type="transmembrane region" description="Helical" evidence="2">
    <location>
        <begin position="63"/>
        <end position="83"/>
    </location>
</feature>
<feature type="transmembrane region" description="Helical" evidence="2">
    <location>
        <begin position="91"/>
        <end position="111"/>
    </location>
</feature>
<feature type="transmembrane region" description="Helical" evidence="2">
    <location>
        <begin position="122"/>
        <end position="144"/>
    </location>
</feature>
<feature type="transmembrane region" description="Helical" evidence="2">
    <location>
        <begin position="164"/>
        <end position="184"/>
    </location>
</feature>
<feature type="transmembrane region" description="Helical" evidence="2">
    <location>
        <begin position="192"/>
        <end position="212"/>
    </location>
</feature>
<feature type="transmembrane region" description="Helical" evidence="2">
    <location>
        <begin position="225"/>
        <end position="245"/>
    </location>
</feature>
<feature type="region of interest" description="Disordered" evidence="3">
    <location>
        <begin position="1"/>
        <end position="21"/>
    </location>
</feature>
<feature type="compositionally biased region" description="Polar residues" evidence="3">
    <location>
        <begin position="1"/>
        <end position="14"/>
    </location>
</feature>
<evidence type="ECO:0000250" key="1">
    <source>
        <dbReference type="UniProtKB" id="Q460G9"/>
    </source>
</evidence>
<evidence type="ECO:0000255" key="2"/>
<evidence type="ECO:0000256" key="3">
    <source>
        <dbReference type="SAM" id="MobiDB-lite"/>
    </source>
</evidence>
<evidence type="ECO:0000305" key="4"/>
<evidence type="ECO:0000312" key="5">
    <source>
        <dbReference type="EMBL" id="EDP48046.1"/>
    </source>
</evidence>
<keyword id="KW-1003">Cell membrane</keyword>
<keyword id="KW-0472">Membrane</keyword>
<keyword id="KW-0812">Transmembrane</keyword>
<keyword id="KW-1133">Transmembrane helix</keyword>
<dbReference type="EMBL" id="DS499601">
    <property type="protein sequence ID" value="EDP48046.1"/>
    <property type="status" value="ALT_SEQ"/>
    <property type="molecule type" value="Genomic_DNA"/>
</dbReference>
<dbReference type="SMR" id="B0YBR5"/>
<dbReference type="OrthoDB" id="95251at5052"/>
<dbReference type="PhylomeDB" id="B0YBR5"/>
<dbReference type="Proteomes" id="UP000001699">
    <property type="component" value="Unassembled WGS sequence"/>
</dbReference>
<dbReference type="GO" id="GO:0030428">
    <property type="term" value="C:cell septum"/>
    <property type="evidence" value="ECO:0007669"/>
    <property type="project" value="UniProtKB-SubCell"/>
</dbReference>
<dbReference type="GO" id="GO:0005886">
    <property type="term" value="C:plasma membrane"/>
    <property type="evidence" value="ECO:0007669"/>
    <property type="project" value="UniProtKB-SubCell"/>
</dbReference>
<dbReference type="GO" id="GO:0015123">
    <property type="term" value="F:acetate transmembrane transporter activity"/>
    <property type="evidence" value="ECO:0007669"/>
    <property type="project" value="TreeGrafter"/>
</dbReference>
<dbReference type="InterPro" id="IPR051633">
    <property type="entry name" value="AceTr"/>
</dbReference>
<dbReference type="InterPro" id="IPR000791">
    <property type="entry name" value="Gpr1/Fun34/SatP-like"/>
</dbReference>
<dbReference type="PANTHER" id="PTHR31123">
    <property type="entry name" value="ACCUMULATION OF DYADS PROTEIN 2-RELATED"/>
    <property type="match status" value="1"/>
</dbReference>
<dbReference type="PANTHER" id="PTHR31123:SF4">
    <property type="entry name" value="PROTEIN ALCS"/>
    <property type="match status" value="1"/>
</dbReference>
<dbReference type="Pfam" id="PF01184">
    <property type="entry name" value="Gpr1_Fun34_YaaH"/>
    <property type="match status" value="1"/>
</dbReference>
<gene>
    <name evidence="1" type="primary">alcS</name>
    <name type="ORF">AFUB_087570</name>
</gene>
<sequence>MDTEQGLKNHTAKTSPHDETAMASLTTIPTSVTLSAEQFEKLYLSPLTQRQGMLSKQMGNPTPLALGGFVITTTPLSCCLMGWRGATGSGIAFTGPIIFLGGGLLVLTSILEFILGNTFPCVVFGTIGAFWFAFGCTMTPAFNAAAPFSTSATDTVAGLSSPDFLNTYAFLFIWMGVLMLIFLACATRTNAVYVAIFTTLTLVFGFLSGAYWRLAVADALVGNRLVVAAGACLFVASMLGFYLLVAQLFDSVGLPVRLPVGDLSRFWDRRAR</sequence>
<comment type="subcellular location">
    <subcellularLocation>
        <location>Cell membrane</location>
        <topology>Multi-pass membrane protein</topology>
    </subcellularLocation>
    <subcellularLocation>
        <location evidence="1 2">Cell septum</location>
    </subcellularLocation>
</comment>
<comment type="similarity">
    <text evidence="4">Belongs to the acetate uptake transporter (AceTr) (TC 2.A.96) family.</text>
</comment>
<comment type="sequence caution" evidence="4">
    <conflict type="erroneous gene model prediction">
        <sequence resource="EMBL-CDS" id="EDP48046"/>
    </conflict>
</comment>
<proteinExistence type="inferred from homology"/>
<name>ALCS_ASPFC</name>
<protein>
    <recommendedName>
        <fullName evidence="1">Protein alcS</fullName>
    </recommendedName>
</protein>
<organism>
    <name type="scientific">Aspergillus fumigatus (strain CBS 144.89 / FGSC A1163 / CEA10)</name>
    <name type="common">Neosartorya fumigata</name>
    <dbReference type="NCBI Taxonomy" id="451804"/>
    <lineage>
        <taxon>Eukaryota</taxon>
        <taxon>Fungi</taxon>
        <taxon>Dikarya</taxon>
        <taxon>Ascomycota</taxon>
        <taxon>Pezizomycotina</taxon>
        <taxon>Eurotiomycetes</taxon>
        <taxon>Eurotiomycetidae</taxon>
        <taxon>Eurotiales</taxon>
        <taxon>Aspergillaceae</taxon>
        <taxon>Aspergillus</taxon>
        <taxon>Aspergillus subgen. Fumigati</taxon>
    </lineage>
</organism>
<reference evidence="5" key="1">
    <citation type="journal article" date="2008" name="PLoS Genet.">
        <title>Genomic islands in the pathogenic filamentous fungus Aspergillus fumigatus.</title>
        <authorList>
            <person name="Fedorova N.D."/>
            <person name="Khaldi N."/>
            <person name="Joardar V.S."/>
            <person name="Maiti R."/>
            <person name="Amedeo P."/>
            <person name="Anderson M.J."/>
            <person name="Crabtree J."/>
            <person name="Silva J.C."/>
            <person name="Badger J.H."/>
            <person name="Albarraq A."/>
            <person name="Angiuoli S."/>
            <person name="Bussey H."/>
            <person name="Bowyer P."/>
            <person name="Cotty P.J."/>
            <person name="Dyer P.S."/>
            <person name="Egan A."/>
            <person name="Galens K."/>
            <person name="Fraser-Liggett C.M."/>
            <person name="Haas B.J."/>
            <person name="Inman J.M."/>
            <person name="Kent R."/>
            <person name="Lemieux S."/>
            <person name="Malavazi I."/>
            <person name="Orvis J."/>
            <person name="Roemer T."/>
            <person name="Ronning C.M."/>
            <person name="Sundaram J.P."/>
            <person name="Sutton G."/>
            <person name="Turner G."/>
            <person name="Venter J.C."/>
            <person name="White O.R."/>
            <person name="Whitty B.R."/>
            <person name="Youngman P."/>
            <person name="Wolfe K.H."/>
            <person name="Goldman G.H."/>
            <person name="Wortman J.R."/>
            <person name="Jiang B."/>
            <person name="Denning D.W."/>
            <person name="Nierman W.C."/>
        </authorList>
    </citation>
    <scope>NUCLEOTIDE SEQUENCE [LARGE SCALE GENOMIC DNA]</scope>
    <source>
        <strain>CBS 144.89 / FGSC A1163 / CEA10</strain>
    </source>
</reference>